<sequence>MNKMLYIKTYGCQMNVYDSNRMVDLLETQGYNIVANMADASVIILNTCHIREKASEKMYSELGRIKKLQQSRLKAGKSKAKIIVAGCVGQAEGEEIFIREPAVNIIVGPQSYYNLPTMLEKLDSGTENHLIDLDFVEAAKFNKLPEVLKSPTVSGLVSVQEGCDKFCTFCVVPYTRGAEFSRPLEQVYREVLNIAQQGAKEVVLVGQNVSAYHGKDENGKECSLADLIKYVAKIDKIKRIRYITSHPNDMTDQLLSLHATEEKLMPFLHLPVQSGSNKILKLMNRRHSRERYLEIIQQLRELRPDIVISSDIIVGFPGEDDEDFEATLSLAKEARFGQCYSFKYSQRPGTPAAVKQQISEEVKQHRLSILQAQLMQQQLECNQKLIGKVVPVLFDRDGKYDGQIIGKTPYMQSVCIMNEKDNNLYGKIVNVKILTASASSLFGEVYADS</sequence>
<dbReference type="EC" id="2.8.4.3" evidence="1"/>
<dbReference type="EMBL" id="AP008981">
    <property type="protein sequence ID" value="BAG41235.1"/>
    <property type="molecule type" value="Genomic_DNA"/>
</dbReference>
<dbReference type="RefSeq" id="WP_012462195.1">
    <property type="nucleotide sequence ID" value="NC_010793.1"/>
</dbReference>
<dbReference type="SMR" id="B3CV38"/>
<dbReference type="KEGG" id="ott:OTT_1777"/>
<dbReference type="HOGENOM" id="CLU_018697_2_0_5"/>
<dbReference type="OrthoDB" id="9805215at2"/>
<dbReference type="Proteomes" id="UP000001033">
    <property type="component" value="Chromosome"/>
</dbReference>
<dbReference type="GO" id="GO:0005829">
    <property type="term" value="C:cytosol"/>
    <property type="evidence" value="ECO:0007669"/>
    <property type="project" value="TreeGrafter"/>
</dbReference>
<dbReference type="GO" id="GO:0051539">
    <property type="term" value="F:4 iron, 4 sulfur cluster binding"/>
    <property type="evidence" value="ECO:0007669"/>
    <property type="project" value="UniProtKB-UniRule"/>
</dbReference>
<dbReference type="GO" id="GO:0046872">
    <property type="term" value="F:metal ion binding"/>
    <property type="evidence" value="ECO:0007669"/>
    <property type="project" value="UniProtKB-KW"/>
</dbReference>
<dbReference type="GO" id="GO:0035597">
    <property type="term" value="F:N6-isopentenyladenosine methylthiotransferase activity"/>
    <property type="evidence" value="ECO:0007669"/>
    <property type="project" value="TreeGrafter"/>
</dbReference>
<dbReference type="CDD" id="cd01335">
    <property type="entry name" value="Radical_SAM"/>
    <property type="match status" value="1"/>
</dbReference>
<dbReference type="FunFam" id="3.40.50.12160:FF:000003">
    <property type="entry name" value="CDK5 regulatory subunit-associated protein 1"/>
    <property type="match status" value="1"/>
</dbReference>
<dbReference type="FunFam" id="3.80.30.20:FF:000001">
    <property type="entry name" value="tRNA-2-methylthio-N(6)-dimethylallyladenosine synthase 2"/>
    <property type="match status" value="1"/>
</dbReference>
<dbReference type="Gene3D" id="3.40.50.12160">
    <property type="entry name" value="Methylthiotransferase, N-terminal domain"/>
    <property type="match status" value="1"/>
</dbReference>
<dbReference type="Gene3D" id="3.80.30.20">
    <property type="entry name" value="tm_1862 like domain"/>
    <property type="match status" value="1"/>
</dbReference>
<dbReference type="HAMAP" id="MF_01864">
    <property type="entry name" value="tRNA_metthiotr_MiaB"/>
    <property type="match status" value="1"/>
</dbReference>
<dbReference type="InterPro" id="IPR006638">
    <property type="entry name" value="Elp3/MiaA/NifB-like_rSAM"/>
</dbReference>
<dbReference type="InterPro" id="IPR005839">
    <property type="entry name" value="Methylthiotransferase"/>
</dbReference>
<dbReference type="InterPro" id="IPR020612">
    <property type="entry name" value="Methylthiotransferase_CS"/>
</dbReference>
<dbReference type="InterPro" id="IPR013848">
    <property type="entry name" value="Methylthiotransferase_N"/>
</dbReference>
<dbReference type="InterPro" id="IPR038135">
    <property type="entry name" value="Methylthiotransferase_N_sf"/>
</dbReference>
<dbReference type="InterPro" id="IPR006463">
    <property type="entry name" value="MiaB_methiolase"/>
</dbReference>
<dbReference type="InterPro" id="IPR007197">
    <property type="entry name" value="rSAM"/>
</dbReference>
<dbReference type="InterPro" id="IPR023404">
    <property type="entry name" value="rSAM_horseshoe"/>
</dbReference>
<dbReference type="InterPro" id="IPR002792">
    <property type="entry name" value="TRAM_dom"/>
</dbReference>
<dbReference type="NCBIfam" id="TIGR01574">
    <property type="entry name" value="miaB-methiolase"/>
    <property type="match status" value="1"/>
</dbReference>
<dbReference type="NCBIfam" id="TIGR00089">
    <property type="entry name" value="MiaB/RimO family radical SAM methylthiotransferase"/>
    <property type="match status" value="1"/>
</dbReference>
<dbReference type="PANTHER" id="PTHR43020">
    <property type="entry name" value="CDK5 REGULATORY SUBUNIT-ASSOCIATED PROTEIN 1"/>
    <property type="match status" value="1"/>
</dbReference>
<dbReference type="PANTHER" id="PTHR43020:SF2">
    <property type="entry name" value="MITOCHONDRIAL TRNA METHYLTHIOTRANSFERASE CDK5RAP1"/>
    <property type="match status" value="1"/>
</dbReference>
<dbReference type="Pfam" id="PF04055">
    <property type="entry name" value="Radical_SAM"/>
    <property type="match status" value="1"/>
</dbReference>
<dbReference type="Pfam" id="PF01938">
    <property type="entry name" value="TRAM"/>
    <property type="match status" value="1"/>
</dbReference>
<dbReference type="Pfam" id="PF00919">
    <property type="entry name" value="UPF0004"/>
    <property type="match status" value="1"/>
</dbReference>
<dbReference type="SFLD" id="SFLDF00273">
    <property type="entry name" value="(dimethylallyl)adenosine_tRNA"/>
    <property type="match status" value="1"/>
</dbReference>
<dbReference type="SFLD" id="SFLDG01082">
    <property type="entry name" value="B12-binding_domain_containing"/>
    <property type="match status" value="1"/>
</dbReference>
<dbReference type="SFLD" id="SFLDG01061">
    <property type="entry name" value="methylthiotransferase"/>
    <property type="match status" value="1"/>
</dbReference>
<dbReference type="SMART" id="SM00729">
    <property type="entry name" value="Elp3"/>
    <property type="match status" value="1"/>
</dbReference>
<dbReference type="SUPFAM" id="SSF102114">
    <property type="entry name" value="Radical SAM enzymes"/>
    <property type="match status" value="1"/>
</dbReference>
<dbReference type="PROSITE" id="PS51449">
    <property type="entry name" value="MTTASE_N"/>
    <property type="match status" value="1"/>
</dbReference>
<dbReference type="PROSITE" id="PS01278">
    <property type="entry name" value="MTTASE_RADICAL"/>
    <property type="match status" value="1"/>
</dbReference>
<dbReference type="PROSITE" id="PS51918">
    <property type="entry name" value="RADICAL_SAM"/>
    <property type="match status" value="1"/>
</dbReference>
<dbReference type="PROSITE" id="PS50926">
    <property type="entry name" value="TRAM"/>
    <property type="match status" value="1"/>
</dbReference>
<organism>
    <name type="scientific">Orientia tsutsugamushi (strain Ikeda)</name>
    <name type="common">Rickettsia tsutsugamushi</name>
    <dbReference type="NCBI Taxonomy" id="334380"/>
    <lineage>
        <taxon>Bacteria</taxon>
        <taxon>Pseudomonadati</taxon>
        <taxon>Pseudomonadota</taxon>
        <taxon>Alphaproteobacteria</taxon>
        <taxon>Rickettsiales</taxon>
        <taxon>Rickettsiaceae</taxon>
        <taxon>Rickettsieae</taxon>
        <taxon>Orientia</taxon>
    </lineage>
</organism>
<accession>B3CV38</accession>
<gene>
    <name evidence="1" type="primary">miaB</name>
    <name type="ordered locus">OTT_1777</name>
</gene>
<keyword id="KW-0004">4Fe-4S</keyword>
<keyword id="KW-0963">Cytoplasm</keyword>
<keyword id="KW-0408">Iron</keyword>
<keyword id="KW-0411">Iron-sulfur</keyword>
<keyword id="KW-0479">Metal-binding</keyword>
<keyword id="KW-0949">S-adenosyl-L-methionine</keyword>
<keyword id="KW-0808">Transferase</keyword>
<keyword id="KW-0819">tRNA processing</keyword>
<protein>
    <recommendedName>
        <fullName evidence="1">tRNA-2-methylthio-N(6)-dimethylallyladenosine synthase</fullName>
        <ecNumber evidence="1">2.8.4.3</ecNumber>
    </recommendedName>
    <alternativeName>
        <fullName evidence="1">(Dimethylallyl)adenosine tRNA methylthiotransferase MiaB</fullName>
    </alternativeName>
    <alternativeName>
        <fullName evidence="1">tRNA-i(6)A37 methylthiotransferase</fullName>
    </alternativeName>
</protein>
<reference key="1">
    <citation type="journal article" date="2008" name="DNA Res.">
        <title>The whole-genome sequencing of the obligate intracellular bacterium Orientia tsutsugamushi revealed massive gene amplification during reductive genome evolution.</title>
        <authorList>
            <person name="Nakayama K."/>
            <person name="Yamashita A."/>
            <person name="Kurokawa K."/>
            <person name="Morimoto T."/>
            <person name="Ogawa M."/>
            <person name="Fukuhara M."/>
            <person name="Urakami H."/>
            <person name="Ohnishi M."/>
            <person name="Uchiyama I."/>
            <person name="Ogura Y."/>
            <person name="Ooka T."/>
            <person name="Oshima K."/>
            <person name="Tamura A."/>
            <person name="Hattori M."/>
            <person name="Hayashi T."/>
        </authorList>
    </citation>
    <scope>NUCLEOTIDE SEQUENCE [LARGE SCALE GENOMIC DNA]</scope>
    <source>
        <strain>Ikeda</strain>
    </source>
</reference>
<proteinExistence type="inferred from homology"/>
<name>MIAB_ORITI</name>
<comment type="function">
    <text evidence="1">Catalyzes the methylthiolation of N6-(dimethylallyl)adenosine (i(6)A), leading to the formation of 2-methylthio-N6-(dimethylallyl)adenosine (ms(2)i(6)A) at position 37 in tRNAs that read codons beginning with uridine.</text>
</comment>
<comment type="catalytic activity">
    <reaction evidence="1">
        <text>N(6)-dimethylallyladenosine(37) in tRNA + (sulfur carrier)-SH + AH2 + 2 S-adenosyl-L-methionine = 2-methylsulfanyl-N(6)-dimethylallyladenosine(37) in tRNA + (sulfur carrier)-H + 5'-deoxyadenosine + L-methionine + A + S-adenosyl-L-homocysteine + 2 H(+)</text>
        <dbReference type="Rhea" id="RHEA:37067"/>
        <dbReference type="Rhea" id="RHEA-COMP:10375"/>
        <dbReference type="Rhea" id="RHEA-COMP:10376"/>
        <dbReference type="Rhea" id="RHEA-COMP:14737"/>
        <dbReference type="Rhea" id="RHEA-COMP:14739"/>
        <dbReference type="ChEBI" id="CHEBI:13193"/>
        <dbReference type="ChEBI" id="CHEBI:15378"/>
        <dbReference type="ChEBI" id="CHEBI:17319"/>
        <dbReference type="ChEBI" id="CHEBI:17499"/>
        <dbReference type="ChEBI" id="CHEBI:29917"/>
        <dbReference type="ChEBI" id="CHEBI:57844"/>
        <dbReference type="ChEBI" id="CHEBI:57856"/>
        <dbReference type="ChEBI" id="CHEBI:59789"/>
        <dbReference type="ChEBI" id="CHEBI:64428"/>
        <dbReference type="ChEBI" id="CHEBI:74415"/>
        <dbReference type="ChEBI" id="CHEBI:74417"/>
        <dbReference type="EC" id="2.8.4.3"/>
    </reaction>
</comment>
<comment type="cofactor">
    <cofactor evidence="1">
        <name>[4Fe-4S] cluster</name>
        <dbReference type="ChEBI" id="CHEBI:49883"/>
    </cofactor>
    <text evidence="1">Binds 2 [4Fe-4S] clusters. One cluster is coordinated with 3 cysteines and an exchangeable S-adenosyl-L-methionine.</text>
</comment>
<comment type="subunit">
    <text evidence="1">Monomer.</text>
</comment>
<comment type="subcellular location">
    <subcellularLocation>
        <location evidence="1">Cytoplasm</location>
    </subcellularLocation>
</comment>
<comment type="similarity">
    <text evidence="1">Belongs to the methylthiotransferase family. MiaB subfamily.</text>
</comment>
<feature type="chain" id="PRO_0000374423" description="tRNA-2-methylthio-N(6)-dimethylallyladenosine synthase">
    <location>
        <begin position="1"/>
        <end position="449"/>
    </location>
</feature>
<feature type="domain" description="MTTase N-terminal" evidence="1">
    <location>
        <begin position="3"/>
        <end position="124"/>
    </location>
</feature>
<feature type="domain" description="Radical SAM core" evidence="2">
    <location>
        <begin position="149"/>
        <end position="380"/>
    </location>
</feature>
<feature type="domain" description="TRAM" evidence="1">
    <location>
        <begin position="383"/>
        <end position="447"/>
    </location>
</feature>
<feature type="binding site" evidence="1">
    <location>
        <position position="12"/>
    </location>
    <ligand>
        <name>[4Fe-4S] cluster</name>
        <dbReference type="ChEBI" id="CHEBI:49883"/>
        <label>1</label>
    </ligand>
</feature>
<feature type="binding site" evidence="1">
    <location>
        <position position="48"/>
    </location>
    <ligand>
        <name>[4Fe-4S] cluster</name>
        <dbReference type="ChEBI" id="CHEBI:49883"/>
        <label>1</label>
    </ligand>
</feature>
<feature type="binding site" evidence="1">
    <location>
        <position position="87"/>
    </location>
    <ligand>
        <name>[4Fe-4S] cluster</name>
        <dbReference type="ChEBI" id="CHEBI:49883"/>
        <label>1</label>
    </ligand>
</feature>
<feature type="binding site" evidence="1">
    <location>
        <position position="163"/>
    </location>
    <ligand>
        <name>[4Fe-4S] cluster</name>
        <dbReference type="ChEBI" id="CHEBI:49883"/>
        <label>2</label>
        <note>4Fe-4S-S-AdoMet</note>
    </ligand>
</feature>
<feature type="binding site" evidence="1">
    <location>
        <position position="167"/>
    </location>
    <ligand>
        <name>[4Fe-4S] cluster</name>
        <dbReference type="ChEBI" id="CHEBI:49883"/>
        <label>2</label>
        <note>4Fe-4S-S-AdoMet</note>
    </ligand>
</feature>
<feature type="binding site" evidence="1">
    <location>
        <position position="170"/>
    </location>
    <ligand>
        <name>[4Fe-4S] cluster</name>
        <dbReference type="ChEBI" id="CHEBI:49883"/>
        <label>2</label>
        <note>4Fe-4S-S-AdoMet</note>
    </ligand>
</feature>
<evidence type="ECO:0000255" key="1">
    <source>
        <dbReference type="HAMAP-Rule" id="MF_01864"/>
    </source>
</evidence>
<evidence type="ECO:0000255" key="2">
    <source>
        <dbReference type="PROSITE-ProRule" id="PRU01266"/>
    </source>
</evidence>